<comment type="function">
    <text evidence="1">Beta-bungarotoxin is a presynaptic neurotoxin of the venom. The B chain is homologous to venom basic protease inhibitors but has no protease inhibitor activity and is non-toxic (By similarity).</text>
</comment>
<comment type="subunit">
    <text evidence="1">Heterodimer; disulfide-linked. The A chain has phospholipase A2 activity and the B chain shows homology with the basic protease inhibitors (By similarity).</text>
</comment>
<comment type="subcellular location">
    <subcellularLocation>
        <location evidence="1">Secreted</location>
    </subcellularLocation>
</comment>
<comment type="tissue specificity">
    <text>Expressed by the venom gland.</text>
</comment>
<comment type="similarity">
    <text evidence="3">Belongs to the venom Kunitz-type family.</text>
</comment>
<comment type="sequence caution" evidence="3">
    <conflict type="erroneous initiation">
        <sequence resource="EMBL-CDS" id="AAL30067"/>
    </conflict>
</comment>
<proteinExistence type="evidence at transcript level"/>
<keyword id="KW-1015">Disulfide bond</keyword>
<keyword id="KW-0528">Neurotoxin</keyword>
<keyword id="KW-0638">Presynaptic neurotoxin</keyword>
<keyword id="KW-0964">Secreted</keyword>
<keyword id="KW-0732">Signal</keyword>
<keyword id="KW-0800">Toxin</keyword>
<feature type="signal peptide" evidence="1">
    <location>
        <begin position="1"/>
        <end position="24"/>
    </location>
</feature>
<feature type="chain" id="PRO_0000271461" description="Kunitz-type serine protease inhibitor homolog beta-bungarotoxin B2b chain">
    <location>
        <begin position="25"/>
        <end position="85"/>
    </location>
</feature>
<feature type="domain" description="BPTI/Kunitz inhibitor" evidence="2">
    <location>
        <begin position="31"/>
        <end position="81"/>
    </location>
</feature>
<feature type="disulfide bond" evidence="2">
    <location>
        <begin position="31"/>
        <end position="81"/>
    </location>
</feature>
<feature type="disulfide bond" evidence="2">
    <location>
        <begin position="40"/>
        <end position="64"/>
    </location>
</feature>
<feature type="disulfide bond" evidence="2">
    <location>
        <begin position="56"/>
        <end position="77"/>
    </location>
</feature>
<feature type="disulfide bond" description="Interchain (with an A chain)" evidence="2">
    <location>
        <position position="79"/>
    </location>
</feature>
<name>VKTH7_BUNCA</name>
<protein>
    <recommendedName>
        <fullName>Kunitz-type serine protease inhibitor homolog beta-bungarotoxin B2b chain</fullName>
    </recommendedName>
</protein>
<accession>Q8AY44</accession>
<evidence type="ECO:0000250" key="1"/>
<evidence type="ECO:0000255" key="2">
    <source>
        <dbReference type="PROSITE-ProRule" id="PRU00031"/>
    </source>
</evidence>
<evidence type="ECO:0000305" key="3"/>
<reference key="1">
    <citation type="submission" date="2001-10" db="EMBL/GenBank/DDBJ databases">
        <title>Structural and functional genomics of Bungarus candidus.</title>
        <authorList>
            <person name="Tsai I.-H."/>
            <person name="Wang Y.M."/>
            <person name="Hsu H.-Y."/>
        </authorList>
    </citation>
    <scope>NUCLEOTIDE SEQUENCE [MRNA]</scope>
    <source>
        <tissue>Venom gland</tissue>
    </source>
</reference>
<sequence>MSSGGLLLLLGLLTLWAELTPVSSRKRHPDCDKPPDTRICQTVVRAFYYKPSEKRCVQFRYGGCKGNGNHFKSDHLCRCECLEYR</sequence>
<dbReference type="EMBL" id="AY057885">
    <property type="protein sequence ID" value="AAL30067.1"/>
    <property type="status" value="ALT_INIT"/>
    <property type="molecule type" value="mRNA"/>
</dbReference>
<dbReference type="SMR" id="Q8AY44"/>
<dbReference type="GO" id="GO:0005615">
    <property type="term" value="C:extracellular space"/>
    <property type="evidence" value="ECO:0007669"/>
    <property type="project" value="TreeGrafter"/>
</dbReference>
<dbReference type="GO" id="GO:0004867">
    <property type="term" value="F:serine-type endopeptidase inhibitor activity"/>
    <property type="evidence" value="ECO:0007669"/>
    <property type="project" value="InterPro"/>
</dbReference>
<dbReference type="GO" id="GO:0090729">
    <property type="term" value="F:toxin activity"/>
    <property type="evidence" value="ECO:0007669"/>
    <property type="project" value="UniProtKB-KW"/>
</dbReference>
<dbReference type="CDD" id="cd22619">
    <property type="entry name" value="Kunitz_B2B"/>
    <property type="match status" value="1"/>
</dbReference>
<dbReference type="Gene3D" id="4.10.410.10">
    <property type="entry name" value="Pancreatic trypsin inhibitor Kunitz domain"/>
    <property type="match status" value="1"/>
</dbReference>
<dbReference type="InterPro" id="IPR002223">
    <property type="entry name" value="Kunitz_BPTI"/>
</dbReference>
<dbReference type="InterPro" id="IPR036880">
    <property type="entry name" value="Kunitz_BPTI_sf"/>
</dbReference>
<dbReference type="InterPro" id="IPR020901">
    <property type="entry name" value="Prtase_inh_Kunz-CS"/>
</dbReference>
<dbReference type="InterPro" id="IPR050098">
    <property type="entry name" value="TFPI/VKTCI-like"/>
</dbReference>
<dbReference type="PANTHER" id="PTHR10083:SF374">
    <property type="entry name" value="BPTI_KUNITZ INHIBITOR DOMAIN-CONTAINING PROTEIN"/>
    <property type="match status" value="1"/>
</dbReference>
<dbReference type="PANTHER" id="PTHR10083">
    <property type="entry name" value="KUNITZ-TYPE PROTEASE INHIBITOR-RELATED"/>
    <property type="match status" value="1"/>
</dbReference>
<dbReference type="Pfam" id="PF00014">
    <property type="entry name" value="Kunitz_BPTI"/>
    <property type="match status" value="1"/>
</dbReference>
<dbReference type="PRINTS" id="PR00759">
    <property type="entry name" value="BASICPTASE"/>
</dbReference>
<dbReference type="SMART" id="SM00131">
    <property type="entry name" value="KU"/>
    <property type="match status" value="1"/>
</dbReference>
<dbReference type="SUPFAM" id="SSF57362">
    <property type="entry name" value="BPTI-like"/>
    <property type="match status" value="1"/>
</dbReference>
<dbReference type="PROSITE" id="PS00280">
    <property type="entry name" value="BPTI_KUNITZ_1"/>
    <property type="match status" value="1"/>
</dbReference>
<dbReference type="PROSITE" id="PS50279">
    <property type="entry name" value="BPTI_KUNITZ_2"/>
    <property type="match status" value="1"/>
</dbReference>
<organism>
    <name type="scientific">Bungarus candidus</name>
    <name type="common">Malayan krait</name>
    <dbReference type="NCBI Taxonomy" id="92438"/>
    <lineage>
        <taxon>Eukaryota</taxon>
        <taxon>Metazoa</taxon>
        <taxon>Chordata</taxon>
        <taxon>Craniata</taxon>
        <taxon>Vertebrata</taxon>
        <taxon>Euteleostomi</taxon>
        <taxon>Lepidosauria</taxon>
        <taxon>Squamata</taxon>
        <taxon>Bifurcata</taxon>
        <taxon>Unidentata</taxon>
        <taxon>Episquamata</taxon>
        <taxon>Toxicofera</taxon>
        <taxon>Serpentes</taxon>
        <taxon>Colubroidea</taxon>
        <taxon>Elapidae</taxon>
        <taxon>Bungarinae</taxon>
        <taxon>Bungarus</taxon>
    </lineage>
</organism>